<feature type="chain" id="PRO_0000163236" description="RNA-binding protein KhpA">
    <location>
        <begin position="1"/>
        <end position="75"/>
    </location>
</feature>
<feature type="domain" description="KH" evidence="1">
    <location>
        <begin position="29"/>
        <end position="75"/>
    </location>
</feature>
<keyword id="KW-0133">Cell shape</keyword>
<keyword id="KW-0961">Cell wall biogenesis/degradation</keyword>
<keyword id="KW-0143">Chaperone</keyword>
<keyword id="KW-0963">Cytoplasm</keyword>
<keyword id="KW-1185">Reference proteome</keyword>
<keyword id="KW-0694">RNA-binding</keyword>
<reference key="1">
    <citation type="journal article" date="1999" name="Nature">
        <title>Evidence for lateral gene transfer between Archaea and Bacteria from genome sequence of Thermotoga maritima.</title>
        <authorList>
            <person name="Nelson K.E."/>
            <person name="Clayton R.A."/>
            <person name="Gill S.R."/>
            <person name="Gwinn M.L."/>
            <person name="Dodson R.J."/>
            <person name="Haft D.H."/>
            <person name="Hickey E.K."/>
            <person name="Peterson J.D."/>
            <person name="Nelson W.C."/>
            <person name="Ketchum K.A."/>
            <person name="McDonald L.A."/>
            <person name="Utterback T.R."/>
            <person name="Malek J.A."/>
            <person name="Linher K.D."/>
            <person name="Garrett M.M."/>
            <person name="Stewart A.M."/>
            <person name="Cotton M.D."/>
            <person name="Pratt M.S."/>
            <person name="Phillips C.A."/>
            <person name="Richardson D.L."/>
            <person name="Heidelberg J.F."/>
            <person name="Sutton G.G."/>
            <person name="Fleischmann R.D."/>
            <person name="Eisen J.A."/>
            <person name="White O."/>
            <person name="Salzberg S.L."/>
            <person name="Smith H.O."/>
            <person name="Venter J.C."/>
            <person name="Fraser C.M."/>
        </authorList>
    </citation>
    <scope>NUCLEOTIDE SEQUENCE [LARGE SCALE GENOMIC DNA]</scope>
    <source>
        <strain>ATCC 43589 / DSM 3109 / JCM 10099 / NBRC 100826 / MSB8</strain>
    </source>
</reference>
<dbReference type="EMBL" id="AE000512">
    <property type="protein sequence ID" value="AAD36634.1"/>
    <property type="molecule type" value="Genomic_DNA"/>
</dbReference>
<dbReference type="PIR" id="H72236">
    <property type="entry name" value="H72236"/>
</dbReference>
<dbReference type="RefSeq" id="NP_229367.1">
    <property type="nucleotide sequence ID" value="NC_000853.1"/>
</dbReference>
<dbReference type="RefSeq" id="WP_004081981.1">
    <property type="nucleotide sequence ID" value="NZ_CP011107.1"/>
</dbReference>
<dbReference type="SMR" id="Q9X1Q3"/>
<dbReference type="FunCoup" id="Q9X1Q3">
    <property type="interactions" value="193"/>
</dbReference>
<dbReference type="STRING" id="243274.TM_1567"/>
<dbReference type="PaxDb" id="243274-THEMA_06445"/>
<dbReference type="EnsemblBacteria" id="AAD36634">
    <property type="protein sequence ID" value="AAD36634"/>
    <property type="gene ID" value="TM_1567"/>
</dbReference>
<dbReference type="KEGG" id="tma:TM1567"/>
<dbReference type="KEGG" id="tmi:THEMA_06445"/>
<dbReference type="KEGG" id="tmm:Tmari_1575"/>
<dbReference type="KEGG" id="tmw:THMA_1602"/>
<dbReference type="eggNOG" id="COG1837">
    <property type="taxonomic scope" value="Bacteria"/>
</dbReference>
<dbReference type="InParanoid" id="Q9X1Q3"/>
<dbReference type="OrthoDB" id="9812389at2"/>
<dbReference type="Proteomes" id="UP000008183">
    <property type="component" value="Chromosome"/>
</dbReference>
<dbReference type="GO" id="GO:0005737">
    <property type="term" value="C:cytoplasm"/>
    <property type="evidence" value="ECO:0007669"/>
    <property type="project" value="UniProtKB-SubCell"/>
</dbReference>
<dbReference type="GO" id="GO:0003723">
    <property type="term" value="F:RNA binding"/>
    <property type="evidence" value="ECO:0007669"/>
    <property type="project" value="UniProtKB-UniRule"/>
</dbReference>
<dbReference type="GO" id="GO:0071555">
    <property type="term" value="P:cell wall organization"/>
    <property type="evidence" value="ECO:0007669"/>
    <property type="project" value="UniProtKB-KW"/>
</dbReference>
<dbReference type="GO" id="GO:0009252">
    <property type="term" value="P:peptidoglycan biosynthetic process"/>
    <property type="evidence" value="ECO:0007669"/>
    <property type="project" value="UniProtKB-UniRule"/>
</dbReference>
<dbReference type="GO" id="GO:0008360">
    <property type="term" value="P:regulation of cell shape"/>
    <property type="evidence" value="ECO:0007669"/>
    <property type="project" value="UniProtKB-KW"/>
</dbReference>
<dbReference type="CDD" id="cd22533">
    <property type="entry name" value="KH-II_YlqC-like"/>
    <property type="match status" value="1"/>
</dbReference>
<dbReference type="Gene3D" id="3.30.300.20">
    <property type="match status" value="1"/>
</dbReference>
<dbReference type="HAMAP" id="MF_00088">
    <property type="entry name" value="KhpA"/>
    <property type="match status" value="1"/>
</dbReference>
<dbReference type="InterPro" id="IPR015946">
    <property type="entry name" value="KH_dom-like_a/b"/>
</dbReference>
<dbReference type="InterPro" id="IPR009019">
    <property type="entry name" value="KH_sf_prok-type"/>
</dbReference>
<dbReference type="InterPro" id="IPR020627">
    <property type="entry name" value="KhpA"/>
</dbReference>
<dbReference type="PANTHER" id="PTHR34654:SF1">
    <property type="entry name" value="RNA-BINDING PROTEIN KHPA"/>
    <property type="match status" value="1"/>
</dbReference>
<dbReference type="PANTHER" id="PTHR34654">
    <property type="entry name" value="UPF0109 PROTEIN SCO5592"/>
    <property type="match status" value="1"/>
</dbReference>
<dbReference type="Pfam" id="PF13083">
    <property type="entry name" value="KH_KhpA-B"/>
    <property type="match status" value="1"/>
</dbReference>
<dbReference type="SUPFAM" id="SSF54814">
    <property type="entry name" value="Prokaryotic type KH domain (KH-domain type II)"/>
    <property type="match status" value="1"/>
</dbReference>
<dbReference type="PROSITE" id="PS50084">
    <property type="entry name" value="KH_TYPE_1"/>
    <property type="match status" value="1"/>
</dbReference>
<comment type="function">
    <text evidence="1">A probable RNA chaperone. Forms a complex with KhpB which binds to cellular RNA and controls its expression. Plays a role in peptidoglycan (PG) homeostasis and cell length regulation.</text>
</comment>
<comment type="subunit">
    <text evidence="1">Forms a complex with KhpB.</text>
</comment>
<comment type="subcellular location">
    <subcellularLocation>
        <location evidence="1">Cytoplasm</location>
    </subcellularLocation>
</comment>
<comment type="similarity">
    <text evidence="1">Belongs to the KhpA RNA-binding protein family.</text>
</comment>
<gene>
    <name evidence="1" type="primary">khpA</name>
    <name type="ordered locus">TM_1567</name>
</gene>
<proteinExistence type="inferred from homology"/>
<sequence length="75" mass="8494">MKELLEKILRGIVKHPEEVVVMEFDEEGKKVYEIVVNEEDVGQVIGKDGRTIKSLKILLSALMGDSKEITIKVVR</sequence>
<organism>
    <name type="scientific">Thermotoga maritima (strain ATCC 43589 / DSM 3109 / JCM 10099 / NBRC 100826 / MSB8)</name>
    <dbReference type="NCBI Taxonomy" id="243274"/>
    <lineage>
        <taxon>Bacteria</taxon>
        <taxon>Thermotogati</taxon>
        <taxon>Thermotogota</taxon>
        <taxon>Thermotogae</taxon>
        <taxon>Thermotogales</taxon>
        <taxon>Thermotogaceae</taxon>
        <taxon>Thermotoga</taxon>
    </lineage>
</organism>
<accession>Q9X1Q3</accession>
<evidence type="ECO:0000255" key="1">
    <source>
        <dbReference type="HAMAP-Rule" id="MF_00088"/>
    </source>
</evidence>
<name>KHPA_THEMA</name>
<protein>
    <recommendedName>
        <fullName evidence="1">RNA-binding protein KhpA</fullName>
    </recommendedName>
    <alternativeName>
        <fullName evidence="1">KH-domain protein A</fullName>
    </alternativeName>
</protein>